<comment type="function">
    <text evidence="1 3 7 8">Sodium leak channel functioning as an osmosensor regulating sodium ion levels in various tissues and organs. While most sodium channels are voltage-gated, SCN7A is not and lets sodium flow through membrane along its concentration gradient (PubMed:21084682, PubMed:9001394). In glial cells of the central nervous system, senses body-fluid sodium levels and controls salt intake behavior as well as voluntary water intake through activation of nearby neurons to maintain appropriate sodium levels in the body (By similarity). By mediating sodium influx into keratinocytes, also plays a role in skin barrier homeostasis (By similarity).</text>
</comment>
<comment type="catalytic activity">
    <reaction evidence="7">
        <text>Na(+)(in) = Na(+)(out)</text>
        <dbReference type="Rhea" id="RHEA:34963"/>
        <dbReference type="ChEBI" id="CHEBI:29101"/>
    </reaction>
</comment>
<comment type="subunit">
    <text evidence="1 3">The sodium channel formed by SCN7A is probably a heterooligomeric complex consisting of the ion conducting pore forming alpha subunit SCN7A and regulatory beta subunits such as SCN3B (By similarity). Interacts with ATP1A1; activates ATP1A1 and thereby indirectly signals to nearby neurons to regulate sodium homeostasis (By similarity).</text>
</comment>
<comment type="subcellular location">
    <subcellularLocation>
        <location evidence="3">Cell membrane</location>
        <topology evidence="4">Multi-pass membrane protein</topology>
    </subcellularLocation>
</comment>
<comment type="alternative products">
    <event type="alternative splicing"/>
    <isoform>
        <id>F1LQQ7-1</id>
        <name>1</name>
        <sequence type="displayed"/>
    </isoform>
    <isoform>
        <id>F1LQQ7-2</id>
        <name>2</name>
        <sequence type="described" ref="VSP_062264"/>
    </isoform>
</comment>
<comment type="tissue specificity">
    <text evidence="6 8">Not tissue specific but widely expressed.</text>
</comment>
<comment type="domain">
    <text evidence="12">The sequence contains 4 internal repeats, each with 5 hydrophobic segments (S1, S2, S3, S5, S6) and one positively charged segment (S4). Segments S4 are probably the voltage-sensors and are characterized by a series of positively charged amino acids at every third position.</text>
</comment>
<comment type="similarity">
    <text evidence="12">Belongs to the sodium channel (TC 1.A.1.10) family. SCN7A subfamily.</text>
</comment>
<dbReference type="EMBL" id="Y09164">
    <property type="protein sequence ID" value="CAA70364.1"/>
    <property type="molecule type" value="mRNA"/>
</dbReference>
<dbReference type="EMBL" id="JACYVU010000115">
    <property type="status" value="NOT_ANNOTATED_CDS"/>
    <property type="molecule type" value="Genomic_DNA"/>
</dbReference>
<dbReference type="EMBL" id="M96578">
    <property type="protein sequence ID" value="AAA41303.1"/>
    <property type="molecule type" value="mRNA"/>
</dbReference>
<dbReference type="PIR" id="A46206">
    <property type="entry name" value="A46206"/>
</dbReference>
<dbReference type="RefSeq" id="NP_001375437.1">
    <molecule id="F1LQQ7-1"/>
    <property type="nucleotide sequence ID" value="NM_001388508.1"/>
</dbReference>
<dbReference type="RefSeq" id="NP_113874.1">
    <property type="nucleotide sequence ID" value="NM_031686.1"/>
</dbReference>
<dbReference type="RefSeq" id="XP_006234358.1">
    <property type="nucleotide sequence ID" value="XM_006234296.3"/>
</dbReference>
<dbReference type="RefSeq" id="XP_038961706.1">
    <molecule id="F1LQQ7-1"/>
    <property type="nucleotide sequence ID" value="XM_039105778.2"/>
</dbReference>
<dbReference type="RefSeq" id="XP_038961707.1">
    <molecule id="F1LQQ7-1"/>
    <property type="nucleotide sequence ID" value="XM_039105779.2"/>
</dbReference>
<dbReference type="RefSeq" id="XP_063140570.1">
    <molecule id="F1LQQ7-1"/>
    <property type="nucleotide sequence ID" value="XM_063284500.1"/>
</dbReference>
<dbReference type="SMR" id="F1LQQ7"/>
<dbReference type="FunCoup" id="F1LQQ7">
    <property type="interactions" value="6"/>
</dbReference>
<dbReference type="STRING" id="10116.ENSRNOP00000044385"/>
<dbReference type="BindingDB" id="F1LQQ7"/>
<dbReference type="ChEMBL" id="CHEMBL3988641"/>
<dbReference type="GlyGen" id="F1LQQ7">
    <property type="glycosylation" value="4 sites"/>
</dbReference>
<dbReference type="PhosphoSitePlus" id="F1LQQ7"/>
<dbReference type="PaxDb" id="10116-ENSRNOP00000044385"/>
<dbReference type="Ensembl" id="ENSRNOT00000041096.5">
    <molecule id="F1LQQ7-1"/>
    <property type="protein sequence ID" value="ENSRNOP00000044385.5"/>
    <property type="gene ID" value="ENSRNOG00000029342.5"/>
</dbReference>
<dbReference type="GeneID" id="64155"/>
<dbReference type="AGR" id="RGD:61922"/>
<dbReference type="RGD" id="61922">
    <property type="gene designation" value="Scn7a"/>
</dbReference>
<dbReference type="VEuPathDB" id="HostDB:ENSRNOG00000029342"/>
<dbReference type="eggNOG" id="KOG2301">
    <property type="taxonomic scope" value="Eukaryota"/>
</dbReference>
<dbReference type="GeneTree" id="ENSGT00940000162042"/>
<dbReference type="HOGENOM" id="CLU_000540_5_0_1"/>
<dbReference type="InParanoid" id="F1LQQ7"/>
<dbReference type="OMA" id="ENSWFKC"/>
<dbReference type="Proteomes" id="UP000002494">
    <property type="component" value="Chromosome 3"/>
</dbReference>
<dbReference type="Bgee" id="ENSRNOG00000029342">
    <property type="expression patterns" value="Expressed in esophagus and 17 other cell types or tissues"/>
</dbReference>
<dbReference type="GO" id="GO:0097386">
    <property type="term" value="C:glial cell projection"/>
    <property type="evidence" value="ECO:0000266"/>
    <property type="project" value="RGD"/>
</dbReference>
<dbReference type="GO" id="GO:0005886">
    <property type="term" value="C:plasma membrane"/>
    <property type="evidence" value="ECO:0000250"/>
    <property type="project" value="UniProtKB"/>
</dbReference>
<dbReference type="GO" id="GO:1990760">
    <property type="term" value="F:osmolarity-sensing monoatomic cation channel activity"/>
    <property type="evidence" value="ECO:0000314"/>
    <property type="project" value="UniProtKB"/>
</dbReference>
<dbReference type="GO" id="GO:0005272">
    <property type="term" value="F:sodium channel activity"/>
    <property type="evidence" value="ECO:0000250"/>
    <property type="project" value="UniProtKB"/>
</dbReference>
<dbReference type="GO" id="GO:0044325">
    <property type="term" value="F:transmembrane transporter binding"/>
    <property type="evidence" value="ECO:0007669"/>
    <property type="project" value="Ensembl"/>
</dbReference>
<dbReference type="GO" id="GO:0005248">
    <property type="term" value="F:voltage-gated sodium channel activity"/>
    <property type="evidence" value="ECO:0007669"/>
    <property type="project" value="InterPro"/>
</dbReference>
<dbReference type="GO" id="GO:0019725">
    <property type="term" value="P:cellular homeostasis"/>
    <property type="evidence" value="ECO:0000266"/>
    <property type="project" value="RGD"/>
</dbReference>
<dbReference type="GO" id="GO:0007231">
    <property type="term" value="P:osmosensory signaling pathway"/>
    <property type="evidence" value="ECO:0000250"/>
    <property type="project" value="UniProtKB"/>
</dbReference>
<dbReference type="GO" id="GO:0009617">
    <property type="term" value="P:response to bacterium"/>
    <property type="evidence" value="ECO:0000266"/>
    <property type="project" value="RGD"/>
</dbReference>
<dbReference type="GO" id="GO:0055078">
    <property type="term" value="P:sodium ion homeostasis"/>
    <property type="evidence" value="ECO:0000314"/>
    <property type="project" value="UniProtKB"/>
</dbReference>
<dbReference type="GO" id="GO:0006814">
    <property type="term" value="P:sodium ion transport"/>
    <property type="evidence" value="ECO:0000304"/>
    <property type="project" value="RGD"/>
</dbReference>
<dbReference type="CDD" id="cd13433">
    <property type="entry name" value="Na_channel_gate"/>
    <property type="match status" value="1"/>
</dbReference>
<dbReference type="FunFam" id="1.10.238.10:FF:000171">
    <property type="entry name" value="Sodium channel protein"/>
    <property type="match status" value="1"/>
</dbReference>
<dbReference type="FunFam" id="1.10.287.70:FF:000091">
    <property type="entry name" value="Sodium channel protein"/>
    <property type="match status" value="1"/>
</dbReference>
<dbReference type="FunFam" id="1.10.287.70:FF:000112">
    <property type="entry name" value="Sodium channel protein"/>
    <property type="match status" value="1"/>
</dbReference>
<dbReference type="FunFam" id="1.20.120.350:FF:000059">
    <property type="entry name" value="Sodium channel protein"/>
    <property type="match status" value="1"/>
</dbReference>
<dbReference type="FunFam" id="1.20.120.350:FF:000083">
    <property type="entry name" value="Sodium channel protein"/>
    <property type="match status" value="1"/>
</dbReference>
<dbReference type="Gene3D" id="1.10.287.70">
    <property type="match status" value="4"/>
</dbReference>
<dbReference type="Gene3D" id="1.10.238.10">
    <property type="entry name" value="EF-hand"/>
    <property type="match status" value="1"/>
</dbReference>
<dbReference type="Gene3D" id="1.20.5.1190">
    <property type="entry name" value="iswi atpase"/>
    <property type="match status" value="1"/>
</dbReference>
<dbReference type="Gene3D" id="1.20.120.350">
    <property type="entry name" value="Voltage-gated potassium channels. Chain C"/>
    <property type="match status" value="4"/>
</dbReference>
<dbReference type="InterPro" id="IPR005821">
    <property type="entry name" value="Ion_trans_dom"/>
</dbReference>
<dbReference type="InterPro" id="IPR001696">
    <property type="entry name" value="Na_channel_asu"/>
</dbReference>
<dbReference type="InterPro" id="IPR044564">
    <property type="entry name" value="Na_chnl_inactivation_gate"/>
</dbReference>
<dbReference type="InterPro" id="IPR010526">
    <property type="entry name" value="Na_trans_assoc_dom"/>
</dbReference>
<dbReference type="InterPro" id="IPR043203">
    <property type="entry name" value="VGCC_Ca_Na"/>
</dbReference>
<dbReference type="InterPro" id="IPR027359">
    <property type="entry name" value="Volt_channel_dom_sf"/>
</dbReference>
<dbReference type="PANTHER" id="PTHR10037:SF14">
    <property type="entry name" value="SODIUM CHANNEL PROTEIN"/>
    <property type="match status" value="1"/>
</dbReference>
<dbReference type="PANTHER" id="PTHR10037">
    <property type="entry name" value="VOLTAGE-GATED CATION CHANNEL CALCIUM AND SODIUM"/>
    <property type="match status" value="1"/>
</dbReference>
<dbReference type="Pfam" id="PF00520">
    <property type="entry name" value="Ion_trans"/>
    <property type="match status" value="4"/>
</dbReference>
<dbReference type="Pfam" id="PF24609">
    <property type="entry name" value="IQ_SCN5A_C"/>
    <property type="match status" value="1"/>
</dbReference>
<dbReference type="Pfam" id="PF06512">
    <property type="entry name" value="Na_trans_assoc"/>
    <property type="match status" value="1"/>
</dbReference>
<dbReference type="PRINTS" id="PR00170">
    <property type="entry name" value="NACHANNEL"/>
</dbReference>
<dbReference type="SUPFAM" id="SSF81324">
    <property type="entry name" value="Voltage-gated potassium channels"/>
    <property type="match status" value="4"/>
</dbReference>
<feature type="chain" id="PRO_0000460000" description="Sodium channel protein type 7 subunit alpha">
    <location>
        <begin position="1"/>
        <end position="1680"/>
    </location>
</feature>
<feature type="topological domain" description="Cytoplasmic" evidence="12">
    <location>
        <begin position="1"/>
        <end position="117"/>
    </location>
</feature>
<feature type="transmembrane region" description="Helical; Name=S1 of repeat I" evidence="3">
    <location>
        <begin position="118"/>
        <end position="137"/>
    </location>
</feature>
<feature type="topological domain" description="Extracellular" evidence="12">
    <location>
        <begin position="138"/>
        <end position="141"/>
    </location>
</feature>
<feature type="transmembrane region" description="Helical; Name=S2 of repeat I" evidence="3">
    <location>
        <begin position="142"/>
        <end position="167"/>
    </location>
</feature>
<feature type="topological domain" description="Cytoplasmic" evidence="12">
    <location>
        <begin position="168"/>
        <end position="178"/>
    </location>
</feature>
<feature type="transmembrane region" description="Helical; Name=S3 of repeat I" evidence="3">
    <location>
        <begin position="179"/>
        <end position="196"/>
    </location>
</feature>
<feature type="topological domain" description="Extracellular" evidence="12">
    <location>
        <begin position="197"/>
        <end position="200"/>
    </location>
</feature>
<feature type="transmembrane region" description="Helical; Name=S4 of repeat I" evidence="3">
    <location>
        <begin position="201"/>
        <end position="219"/>
    </location>
</feature>
<feature type="topological domain" description="Cytoplasmic" evidence="12">
    <location>
        <begin position="220"/>
        <end position="237"/>
    </location>
</feature>
<feature type="transmembrane region" description="Helical; Name=S5 of repeat I" evidence="3">
    <location>
        <begin position="238"/>
        <end position="259"/>
    </location>
</feature>
<feature type="topological domain" description="Extracellular" evidence="12">
    <location>
        <begin position="260"/>
        <end position="338"/>
    </location>
</feature>
<feature type="intramembrane region" description="Pore-forming" evidence="2">
    <location>
        <begin position="339"/>
        <end position="366"/>
    </location>
</feature>
<feature type="topological domain" description="Extracellular" evidence="12">
    <location>
        <position position="367"/>
    </location>
</feature>
<feature type="transmembrane region" description="Helical; Name=S6 of repeat I" evidence="3">
    <location>
        <begin position="368"/>
        <end position="407"/>
    </location>
</feature>
<feature type="topological domain" description="Cytoplasmic" evidence="12">
    <location>
        <begin position="408"/>
        <end position="505"/>
    </location>
</feature>
<feature type="transmembrane region" description="Helical; Name=S1 of repeat II" evidence="3">
    <location>
        <begin position="506"/>
        <end position="521"/>
    </location>
</feature>
<feature type="topological domain" description="Extracellular" evidence="12">
    <location>
        <begin position="522"/>
        <end position="530"/>
    </location>
</feature>
<feature type="transmembrane region" description="Helical; Name=S2 of repeat II" evidence="3">
    <location>
        <begin position="531"/>
        <end position="559"/>
    </location>
</feature>
<feature type="topological domain" description="Cytoplasmic" evidence="12">
    <location>
        <begin position="560"/>
        <end position="568"/>
    </location>
</feature>
<feature type="transmembrane region" description="Helical; Name=S3 of repeat II" evidence="3">
    <location>
        <begin position="569"/>
        <end position="586"/>
    </location>
</feature>
<feature type="topological domain" description="Extracellular" evidence="12">
    <location>
        <begin position="587"/>
        <end position="592"/>
    </location>
</feature>
<feature type="transmembrane region" description="Helical; Name=S4 of repeat II" evidence="3">
    <location>
        <begin position="593"/>
        <end position="608"/>
    </location>
</feature>
<feature type="topological domain" description="Cytoplasmic" evidence="12">
    <location>
        <begin position="609"/>
        <end position="625"/>
    </location>
</feature>
<feature type="transmembrane region" description="Helical; Name=S5 of repeat II" evidence="3">
    <location>
        <begin position="626"/>
        <end position="654"/>
    </location>
</feature>
<feature type="topological domain" description="Extracellular" evidence="12">
    <location>
        <begin position="655"/>
        <end position="672"/>
    </location>
</feature>
<feature type="intramembrane region" description="Pore-forming" evidence="2">
    <location>
        <begin position="673"/>
        <end position="699"/>
    </location>
</feature>
<feature type="topological domain" description="Extracellular" evidence="12">
    <location>
        <position position="700"/>
    </location>
</feature>
<feature type="transmembrane region" description="Helical; Name=S6 of repeat II" evidence="3">
    <location>
        <begin position="701"/>
        <end position="731"/>
    </location>
</feature>
<feature type="topological domain" description="Cytoplasmic" evidence="12">
    <location>
        <begin position="732"/>
        <end position="933"/>
    </location>
</feature>
<feature type="transmembrane region" description="Helical; Name=S1 of repeat III" evidence="3">
    <location>
        <begin position="934"/>
        <end position="952"/>
    </location>
</feature>
<feature type="topological domain" description="Extracellular" evidence="12">
    <location>
        <begin position="953"/>
        <end position="960"/>
    </location>
</feature>
<feature type="transmembrane region" description="Helical; Name=S2 of repeat III" evidence="3">
    <location>
        <begin position="961"/>
        <end position="989"/>
    </location>
</feature>
<feature type="topological domain" description="Cytoplasmic" evidence="12">
    <location>
        <begin position="990"/>
        <end position="997"/>
    </location>
</feature>
<feature type="transmembrane region" description="Helical; Name=S3 of repeat III" evidence="3">
    <location>
        <begin position="998"/>
        <end position="1019"/>
    </location>
</feature>
<feature type="topological domain" description="Extracellular" evidence="12">
    <location>
        <position position="1020"/>
    </location>
</feature>
<feature type="transmembrane region" description="Helical; Name=S4 of repeat III" evidence="3">
    <location>
        <begin position="1021"/>
        <end position="1039"/>
    </location>
</feature>
<feature type="topological domain" description="Cytoplasmic" evidence="12">
    <location>
        <begin position="1040"/>
        <end position="1054"/>
    </location>
</feature>
<feature type="transmembrane region" description="Helical; Name=S5 of repeat III" evidence="3">
    <location>
        <begin position="1055"/>
        <end position="1079"/>
    </location>
</feature>
<feature type="topological domain" description="Extracellular" evidence="12">
    <location>
        <begin position="1080"/>
        <end position="1126"/>
    </location>
</feature>
<feature type="intramembrane region" description="Pore-forming" evidence="2">
    <location>
        <begin position="1127"/>
        <end position="1153"/>
    </location>
</feature>
<feature type="topological domain" description="Extracellular" evidence="12">
    <location>
        <begin position="1154"/>
        <end position="1166"/>
    </location>
</feature>
<feature type="transmembrane region" description="Helical; Name=S6 of repeat III" evidence="3">
    <location>
        <begin position="1167"/>
        <end position="1201"/>
    </location>
</feature>
<feature type="topological domain" description="Cytoplasmic" evidence="12">
    <location>
        <begin position="1202"/>
        <end position="1249"/>
    </location>
</feature>
<feature type="transmembrane region" description="Helical; Name=S1 of repeat IV" evidence="3">
    <location>
        <begin position="1250"/>
        <end position="1271"/>
    </location>
</feature>
<feature type="topological domain" description="Extracellular" evidence="12">
    <location>
        <begin position="1272"/>
        <end position="1275"/>
    </location>
</feature>
<feature type="transmembrane region" description="Helical; Name=S2 of repeat IV" evidence="3">
    <location>
        <begin position="1276"/>
        <end position="1304"/>
    </location>
</feature>
<feature type="topological domain" description="Cytoplasmic" evidence="12">
    <location>
        <begin position="1305"/>
        <end position="1311"/>
    </location>
</feature>
<feature type="transmembrane region" description="Helical; Name=S3 of repeat IV" evidence="3">
    <location>
        <begin position="1312"/>
        <end position="1337"/>
    </location>
</feature>
<feature type="topological domain" description="Extracellular" evidence="12">
    <location>
        <begin position="1338"/>
        <end position="1340"/>
    </location>
</feature>
<feature type="transmembrane region" description="Helical; Name=S4 of repeat IV" evidence="3">
    <location>
        <begin position="1341"/>
        <end position="1361"/>
    </location>
</feature>
<feature type="topological domain" description="Cytoplasmic" evidence="12">
    <location>
        <begin position="1362"/>
        <end position="1376"/>
    </location>
</feature>
<feature type="transmembrane region" description="Helical; Name=S5 of repeat IV" evidence="3">
    <location>
        <begin position="1377"/>
        <end position="1401"/>
    </location>
</feature>
<feature type="topological domain" description="Extracellular" evidence="12">
    <location>
        <begin position="1402"/>
        <end position="1419"/>
    </location>
</feature>
<feature type="intramembrane region" description="Pore-forming" evidence="2">
    <location>
        <begin position="1420"/>
        <end position="1443"/>
    </location>
</feature>
<feature type="topological domain" description="Extracellular" evidence="12">
    <location>
        <begin position="1444"/>
        <end position="1467"/>
    </location>
</feature>
<feature type="transmembrane region" description="Helical; Name=S6 of repeat IV" evidence="3">
    <location>
        <begin position="1468"/>
        <end position="1503"/>
    </location>
</feature>
<feature type="topological domain" description="Cytoplasmic" evidence="12">
    <location>
        <begin position="1504"/>
        <end position="1680"/>
    </location>
</feature>
<feature type="repeat" description="I" evidence="3">
    <location>
        <begin position="100"/>
        <end position="401"/>
    </location>
</feature>
<feature type="repeat" description="II" evidence="3">
    <location>
        <begin position="487"/>
        <end position="756"/>
    </location>
</feature>
<feature type="repeat" description="III" evidence="3">
    <location>
        <begin position="915"/>
        <end position="1223"/>
    </location>
</feature>
<feature type="repeat" description="IV" evidence="3">
    <location>
        <begin position="1232"/>
        <end position="1530"/>
    </location>
</feature>
<feature type="region of interest" description="Disordered" evidence="5">
    <location>
        <begin position="807"/>
        <end position="874"/>
    </location>
</feature>
<feature type="region of interest" description="Disordered" evidence="5">
    <location>
        <begin position="1646"/>
        <end position="1680"/>
    </location>
</feature>
<feature type="compositionally biased region" description="Polar residues" evidence="5">
    <location>
        <begin position="807"/>
        <end position="833"/>
    </location>
</feature>
<feature type="modified residue" description="Phosphoserine" evidence="3">
    <location>
        <position position="842"/>
    </location>
</feature>
<feature type="glycosylation site" description="N-linked (GlcNAc...) asparagine" evidence="4">
    <location>
        <position position="281"/>
    </location>
</feature>
<feature type="glycosylation site" description="N-linked (GlcNAc...) asparagine" evidence="4">
    <location>
        <position position="309"/>
    </location>
</feature>
<feature type="glycosylation site" description="N-linked (GlcNAc...) asparagine" evidence="4">
    <location>
        <position position="1102"/>
    </location>
</feature>
<feature type="glycosylation site" description="N-linked (GlcNAc...) asparagine" evidence="4">
    <location>
        <position position="1112"/>
    </location>
</feature>
<feature type="disulfide bond" evidence="3">
    <location>
        <begin position="267"/>
        <end position="307"/>
    </location>
</feature>
<feature type="disulfide bond" evidence="3">
    <location>
        <begin position="657"/>
        <end position="663"/>
    </location>
</feature>
<feature type="disulfide bond" evidence="3">
    <location>
        <begin position="695"/>
        <end position="704"/>
    </location>
</feature>
<feature type="disulfide bond" evidence="3">
    <location>
        <begin position="1086"/>
        <end position="1106"/>
    </location>
</feature>
<feature type="disulfide bond" evidence="3">
    <location>
        <begin position="1450"/>
        <end position="1465"/>
    </location>
</feature>
<feature type="splice variant" id="VSP_062264" description="In isoform 2.">
    <original>A</original>
    <variation>AELQCIWFYEEVLDLLGLELCIK</variation>
    <location>
        <position position="429"/>
    </location>
</feature>
<feature type="sequence conflict" description="In Ref. 1; CAA70364." evidence="12" ref="1">
    <original>WGL</original>
    <variation>RDI</variation>
    <location>
        <begin position="42"/>
        <end position="44"/>
    </location>
</feature>
<feature type="sequence conflict" description="In Ref. 1; CAA70364." evidence="12" ref="1">
    <original>F</original>
    <variation>L</variation>
    <location>
        <position position="120"/>
    </location>
</feature>
<feature type="sequence conflict" description="In Ref. 1; CAA70364." evidence="12" ref="1">
    <original>L</original>
    <variation>C</variation>
    <location>
        <position position="151"/>
    </location>
</feature>
<feature type="sequence conflict" description="In Ref. 1; CAA70364." evidence="12" ref="1">
    <original>N</original>
    <variation>S</variation>
    <location>
        <position position="281"/>
    </location>
</feature>
<feature type="sequence conflict" description="In Ref. 1; CAA70364." evidence="12" ref="1">
    <original>A</original>
    <variation>G</variation>
    <location>
        <position position="725"/>
    </location>
</feature>
<feature type="sequence conflict" description="In Ref. 1; CAA70364." evidence="12" ref="1">
    <original>D</original>
    <variation>H</variation>
    <location>
        <position position="958"/>
    </location>
</feature>
<feature type="sequence conflict" description="In Ref. 1; CAA70364." evidence="12" ref="1">
    <original>I</original>
    <variation>K</variation>
    <location>
        <position position="1015"/>
    </location>
</feature>
<feature type="sequence conflict" description="In Ref. 1; CAA70364." evidence="12" ref="1">
    <original>A</original>
    <variation>P</variation>
    <location>
        <position position="1026"/>
    </location>
</feature>
<feature type="sequence conflict" description="In Ref. 1; CAA70364." evidence="12" ref="1">
    <original>III</original>
    <variation>VVV</variation>
    <location>
        <begin position="1255"/>
        <end position="1257"/>
    </location>
</feature>
<feature type="sequence conflict" description="In Ref. 3; AAA41303." evidence="12" ref="3">
    <original>TM</original>
    <variation>RR</variation>
    <location>
        <begin position="1290"/>
        <end position="1291"/>
    </location>
</feature>
<feature type="sequence conflict" description="In Ref. 1; CAA70364 and 3; AAA41303." evidence="12" ref="1 3">
    <original>A</original>
    <variation>G</variation>
    <location>
        <position position="1383"/>
    </location>
</feature>
<feature type="sequence conflict" description="In Ref. 3; AAA41303." evidence="12" ref="3">
    <original>N</original>
    <variation>K</variation>
    <location>
        <position position="1415"/>
    </location>
</feature>
<feature type="sequence conflict" description="In Ref. 3; AAA41303." evidence="12" ref="3">
    <original>G</original>
    <variation>V</variation>
    <location>
        <position position="1556"/>
    </location>
</feature>
<feature type="sequence conflict" description="In Ref. 3; AAA41303." evidence="12" ref="3">
    <original>D</original>
    <variation>H</variation>
    <location>
        <position position="1575"/>
    </location>
</feature>
<organism>
    <name type="scientific">Rattus norvegicus</name>
    <name type="common">Rat</name>
    <dbReference type="NCBI Taxonomy" id="10116"/>
    <lineage>
        <taxon>Eukaryota</taxon>
        <taxon>Metazoa</taxon>
        <taxon>Chordata</taxon>
        <taxon>Craniata</taxon>
        <taxon>Vertebrata</taxon>
        <taxon>Euteleostomi</taxon>
        <taxon>Mammalia</taxon>
        <taxon>Eutheria</taxon>
        <taxon>Euarchontoglires</taxon>
        <taxon>Glires</taxon>
        <taxon>Rodentia</taxon>
        <taxon>Myomorpha</taxon>
        <taxon>Muroidea</taxon>
        <taxon>Muridae</taxon>
        <taxon>Murinae</taxon>
        <taxon>Rattus</taxon>
    </lineage>
</organism>
<proteinExistence type="evidence at protein level"/>
<gene>
    <name evidence="13" type="primary">Scn7a</name>
    <name evidence="11" type="synonym">Scl11</name>
</gene>
<accession>F1LQQ7</accession>
<accession>P97706</accession>
<accession>Q01340</accession>
<accession>Q64074</accession>
<protein>
    <recommendedName>
        <fullName evidence="12">Sodium channel protein type 7 subunit alpha</fullName>
    </recommendedName>
    <alternativeName>
        <fullName evidence="9">Glial sodium channel alpha subunit</fullName>
        <shortName evidence="9">Na-G</shortName>
    </alternativeName>
    <alternativeName>
        <fullName evidence="10">Nax channel</fullName>
    </alternativeName>
    <alternativeName>
        <fullName evidence="11">Voltage-gated sodium channel-like protein</fullName>
        <shortName evidence="11">SCL-11</shortName>
    </alternativeName>
</protein>
<evidence type="ECO:0000250" key="1">
    <source>
        <dbReference type="UniProtKB" id="B1AYL1"/>
    </source>
</evidence>
<evidence type="ECO:0000250" key="2">
    <source>
        <dbReference type="UniProtKB" id="D0E0C2"/>
    </source>
</evidence>
<evidence type="ECO:0000250" key="3">
    <source>
        <dbReference type="UniProtKB" id="Q01118"/>
    </source>
</evidence>
<evidence type="ECO:0000255" key="4"/>
<evidence type="ECO:0000256" key="5">
    <source>
        <dbReference type="SAM" id="MobiDB-lite"/>
    </source>
</evidence>
<evidence type="ECO:0000269" key="6">
    <source>
    </source>
</evidence>
<evidence type="ECO:0000269" key="7">
    <source>
    </source>
</evidence>
<evidence type="ECO:0000269" key="8">
    <source>
    </source>
</evidence>
<evidence type="ECO:0000303" key="9">
    <source>
    </source>
</evidence>
<evidence type="ECO:0000303" key="10">
    <source>
    </source>
</evidence>
<evidence type="ECO:0000303" key="11">
    <source>
    </source>
</evidence>
<evidence type="ECO:0000305" key="12"/>
<evidence type="ECO:0000312" key="13">
    <source>
        <dbReference type="RGD" id="61922"/>
    </source>
</evidence>
<name>SCN7A_RAT</name>
<keyword id="KW-0025">Alternative splicing</keyword>
<keyword id="KW-1003">Cell membrane</keyword>
<keyword id="KW-1015">Disulfide bond</keyword>
<keyword id="KW-0325">Glycoprotein</keyword>
<keyword id="KW-0472">Membrane</keyword>
<keyword id="KW-0597">Phosphoprotein</keyword>
<keyword id="KW-1185">Reference proteome</keyword>
<keyword id="KW-0677">Repeat</keyword>
<keyword id="KW-0812">Transmembrane</keyword>
<keyword id="KW-1133">Transmembrane helix</keyword>
<sequence>MLTSPEPKGLVPFTAESLELIKNHIAKKCNEEHEEEDLKPSWGLEAGKKLPFAYGTLPQGTVSEPLEDVDPYYYVKRNTFMVLNRNRVIFRFNAVSILCTLSPLSSLRRAVIKVLVHPLFRLLILISVLTDSILMCMSNLPEWILAVENTLLGIYTFEILVKVIARGIWAGSFSFLGDLWNWLDFSVTLFELITRSSPLSSLPMFKTIRTLRILKIIPLNHGLQSIVVTLVQCLKKLLGAIALALFFLTVSSLFGMGLFMGNLKHKCVRWPQEDGNDVMYNGTGSQYHILERENFYYMEGARYALLCGNKTDAGLCPEGYMCVKEGSNPDNGFTSFDNFGWALLAMFRLMTQDYPELLYHQILYASGKIYMIFFVLISFWFAFYMASLFLGILTMAYEQEKQRASEESRDMDSKCHQTVKEFEEEHEGAEMETTQIEMKKRSPTSINTTLDILEDTALGHKEEPETSRKECPLCWYKFTKTCFIWKCSPCWIKLNEFADRIITHPLFDLFLVICIILNICFLALEHFPMSEELMSLLAIGNLVFIGIYTIEMILKIIAMHPYGYFQISWHIFDSILVVLGLTEMLLADIEEITVFILVPLIFIKLGKYAPPFKNLMRILGRALVALKDLVLLVSIFIYFSAVFGMKLFGRSYKDCVCHVDQDCQRQRWHMSDFLHAYVTVFRILCGEWIETLWECMEVAGEAWCIPFYMMVILIGNLLILYLFVALVSSFASYDATTEVSKEAKNLQLAVAWIKMVINCVLLKILCKEKTVSTEATDQTCDPSVKENISGHTLSELSNTQTFLRYKDQSSGTEKTPVTESESQSLIASPSVSETVPIASGESDIENLDNKETRSKSANGSSKEKMKQSSSSECSTVDIAISEEEEMVYEHEKSKLHKNGYERKSSAGQVSRESRNGKIWRNIRKTCCKIVENSWFECFIGLVTLLCTGTLALEDIYIDQRKTIKIFLEYGDMIFAYIFILEMLLKWVAYGFKAYFSNNWYKLDFMVVIVLCLSLIGKTREDLNPLASIKFLRALRVLSQFERMKVVLRALIKTTLPAVSVFLVCLMIWLLFSVMGVFLFAGKFYECIDPTRGERFSVFEVMNKSQCENLVFNESMPWENAKLNFDNVGNGFLSLFQVATFNGWISIMNSAIDSVGVYMQPSFEHSLHMYTYFIIFVVFGLFLPLCMLIGVIIRNFNKQKIKQGGSNIFITVKQKKQYRALKKLLYADSQKPAARPRNKFQGFICDVVTHRVFNVIIILLICFQATTIMIQNDEQSPQIETAVFWMNSLFTMLFTLECILKLTAFRCHYFTSAWNVHDFMVVVFSITGLLLPLSIGQYFVPPSLVQLLLLSRIIHVLRPGKGPKVFHDLMLPLMLSLPALLNIALLIFLVMFIYAIFGMYNFAYVKKEAGINDVSNFETFGSSMLCLFQVTTFSGWDGMLDAIFNSQWSDCDPDKINPGTQVRGDCGSPSVGIFYFVSYILISWLIIVNMYVVLIMEFLSIPSKRKNRTLSEDDFRRFFKVWNRFDPDRTQYIDSTKLSDFAAALDPPLFMAKPNKGQLVAMDLPMAAGDRIHCLDILLAFTKRVMGKDERVEKILSEIESGFMLANPFKITYEPITTTLKRKQEAVSATIIQRAYKSYRLRQSDKKIQDIPEIDDGREDPNSKGVHSGQIEEKASIQTQI</sequence>
<reference key="1">
    <citation type="journal article" date="1997" name="FEBS Lett.">
        <title>Structure and distribution of a broadly expressed atypical sodium channel.</title>
        <authorList>
            <person name="Akopian A.N."/>
            <person name="Souslova V."/>
            <person name="Sivilotti L."/>
            <person name="Wood J.N."/>
        </authorList>
    </citation>
    <scope>NUCLEOTIDE SEQUENCE [MRNA] (ISOFORM 2)</scope>
    <scope>FUNCTION</scope>
    <scope>TISSUE SPECIFICITY</scope>
</reference>
<reference key="2">
    <citation type="journal article" date="2004" name="Nature">
        <title>Genome sequence of the Brown Norway rat yields insights into mammalian evolution.</title>
        <authorList>
            <person name="Gibbs R.A."/>
            <person name="Weinstock G.M."/>
            <person name="Metzker M.L."/>
            <person name="Muzny D.M."/>
            <person name="Sodergren E.J."/>
            <person name="Scherer S."/>
            <person name="Scott G."/>
            <person name="Steffen D."/>
            <person name="Worley K.C."/>
            <person name="Burch P.E."/>
            <person name="Okwuonu G."/>
            <person name="Hines S."/>
            <person name="Lewis L."/>
            <person name="Deramo C."/>
            <person name="Delgado O."/>
            <person name="Dugan-Rocha S."/>
            <person name="Miner G."/>
            <person name="Morgan M."/>
            <person name="Hawes A."/>
            <person name="Gill R."/>
            <person name="Holt R.A."/>
            <person name="Adams M.D."/>
            <person name="Amanatides P.G."/>
            <person name="Baden-Tillson H."/>
            <person name="Barnstead M."/>
            <person name="Chin S."/>
            <person name="Evans C.A."/>
            <person name="Ferriera S."/>
            <person name="Fosler C."/>
            <person name="Glodek A."/>
            <person name="Gu Z."/>
            <person name="Jennings D."/>
            <person name="Kraft C.L."/>
            <person name="Nguyen T."/>
            <person name="Pfannkoch C.M."/>
            <person name="Sitter C."/>
            <person name="Sutton G.G."/>
            <person name="Venter J.C."/>
            <person name="Woodage T."/>
            <person name="Smith D."/>
            <person name="Lee H.-M."/>
            <person name="Gustafson E."/>
            <person name="Cahill P."/>
            <person name="Kana A."/>
            <person name="Doucette-Stamm L."/>
            <person name="Weinstock K."/>
            <person name="Fechtel K."/>
            <person name="Weiss R.B."/>
            <person name="Dunn D.M."/>
            <person name="Green E.D."/>
            <person name="Blakesley R.W."/>
            <person name="Bouffard G.G."/>
            <person name="De Jong P.J."/>
            <person name="Osoegawa K."/>
            <person name="Zhu B."/>
            <person name="Marra M."/>
            <person name="Schein J."/>
            <person name="Bosdet I."/>
            <person name="Fjell C."/>
            <person name="Jones S."/>
            <person name="Krzywinski M."/>
            <person name="Mathewson C."/>
            <person name="Siddiqui A."/>
            <person name="Wye N."/>
            <person name="McPherson J."/>
            <person name="Zhao S."/>
            <person name="Fraser C.M."/>
            <person name="Shetty J."/>
            <person name="Shatsman S."/>
            <person name="Geer K."/>
            <person name="Chen Y."/>
            <person name="Abramzon S."/>
            <person name="Nierman W.C."/>
            <person name="Havlak P.H."/>
            <person name="Chen R."/>
            <person name="Durbin K.J."/>
            <person name="Egan A."/>
            <person name="Ren Y."/>
            <person name="Song X.-Z."/>
            <person name="Li B."/>
            <person name="Liu Y."/>
            <person name="Qin X."/>
            <person name="Cawley S."/>
            <person name="Cooney A.J."/>
            <person name="D'Souza L.M."/>
            <person name="Martin K."/>
            <person name="Wu J.Q."/>
            <person name="Gonzalez-Garay M.L."/>
            <person name="Jackson A.R."/>
            <person name="Kalafus K.J."/>
            <person name="McLeod M.P."/>
            <person name="Milosavljevic A."/>
            <person name="Virk D."/>
            <person name="Volkov A."/>
            <person name="Wheeler D.A."/>
            <person name="Zhang Z."/>
            <person name="Bailey J.A."/>
            <person name="Eichler E.E."/>
            <person name="Tuzun E."/>
            <person name="Birney E."/>
            <person name="Mongin E."/>
            <person name="Ureta-Vidal A."/>
            <person name="Woodwark C."/>
            <person name="Zdobnov E."/>
            <person name="Bork P."/>
            <person name="Suyama M."/>
            <person name="Torrents D."/>
            <person name="Alexandersson M."/>
            <person name="Trask B.J."/>
            <person name="Young J.M."/>
            <person name="Huang H."/>
            <person name="Wang H."/>
            <person name="Xing H."/>
            <person name="Daniels S."/>
            <person name="Gietzen D."/>
            <person name="Schmidt J."/>
            <person name="Stevens K."/>
            <person name="Vitt U."/>
            <person name="Wingrove J."/>
            <person name="Camara F."/>
            <person name="Mar Alba M."/>
            <person name="Abril J.F."/>
            <person name="Guigo R."/>
            <person name="Smit A."/>
            <person name="Dubchak I."/>
            <person name="Rubin E.M."/>
            <person name="Couronne O."/>
            <person name="Poliakov A."/>
            <person name="Huebner N."/>
            <person name="Ganten D."/>
            <person name="Goesele C."/>
            <person name="Hummel O."/>
            <person name="Kreitler T."/>
            <person name="Lee Y.-A."/>
            <person name="Monti J."/>
            <person name="Schulz H."/>
            <person name="Zimdahl H."/>
            <person name="Himmelbauer H."/>
            <person name="Lehrach H."/>
            <person name="Jacob H.J."/>
            <person name="Bromberg S."/>
            <person name="Gullings-Handley J."/>
            <person name="Jensen-Seaman M.I."/>
            <person name="Kwitek A.E."/>
            <person name="Lazar J."/>
            <person name="Pasko D."/>
            <person name="Tonellato P.J."/>
            <person name="Twigger S."/>
            <person name="Ponting C.P."/>
            <person name="Duarte J.M."/>
            <person name="Rice S."/>
            <person name="Goodstadt L."/>
            <person name="Beatson S.A."/>
            <person name="Emes R.D."/>
            <person name="Winter E.E."/>
            <person name="Webber C."/>
            <person name="Brandt P."/>
            <person name="Nyakatura G."/>
            <person name="Adetobi M."/>
            <person name="Chiaromonte F."/>
            <person name="Elnitski L."/>
            <person name="Eswara P."/>
            <person name="Hardison R.C."/>
            <person name="Hou M."/>
            <person name="Kolbe D."/>
            <person name="Makova K."/>
            <person name="Miller W."/>
            <person name="Nekrutenko A."/>
            <person name="Riemer C."/>
            <person name="Schwartz S."/>
            <person name="Taylor J."/>
            <person name="Yang S."/>
            <person name="Zhang Y."/>
            <person name="Lindpaintner K."/>
            <person name="Andrews T.D."/>
            <person name="Caccamo M."/>
            <person name="Clamp M."/>
            <person name="Clarke L."/>
            <person name="Curwen V."/>
            <person name="Durbin R.M."/>
            <person name="Eyras E."/>
            <person name="Searle S.M."/>
            <person name="Cooper G.M."/>
            <person name="Batzoglou S."/>
            <person name="Brudno M."/>
            <person name="Sidow A."/>
            <person name="Stone E.A."/>
            <person name="Payseur B.A."/>
            <person name="Bourque G."/>
            <person name="Lopez-Otin C."/>
            <person name="Puente X.S."/>
            <person name="Chakrabarti K."/>
            <person name="Chatterji S."/>
            <person name="Dewey C."/>
            <person name="Pachter L."/>
            <person name="Bray N."/>
            <person name="Yap V.B."/>
            <person name="Caspi A."/>
            <person name="Tesler G."/>
            <person name="Pevzner P.A."/>
            <person name="Haussler D."/>
            <person name="Roskin K.M."/>
            <person name="Baertsch R."/>
            <person name="Clawson H."/>
            <person name="Furey T.S."/>
            <person name="Hinrichs A.S."/>
            <person name="Karolchik D."/>
            <person name="Kent W.J."/>
            <person name="Rosenbloom K.R."/>
            <person name="Trumbower H."/>
            <person name="Weirauch M."/>
            <person name="Cooper D.N."/>
            <person name="Stenson P.D."/>
            <person name="Ma B."/>
            <person name="Brent M."/>
            <person name="Arumugam M."/>
            <person name="Shteynberg D."/>
            <person name="Copley R.R."/>
            <person name="Taylor M.S."/>
            <person name="Riethman H."/>
            <person name="Mudunuri U."/>
            <person name="Peterson J."/>
            <person name="Guyer M."/>
            <person name="Felsenfeld A."/>
            <person name="Old S."/>
            <person name="Mockrin S."/>
            <person name="Collins F.S."/>
        </authorList>
    </citation>
    <scope>NUCLEOTIDE SEQUENCE [LARGE SCALE GENOMIC DNA]</scope>
    <source>
        <strain>Brown Norway</strain>
    </source>
</reference>
<reference key="3">
    <citation type="journal article" date="1992" name="Proc. Natl. Acad. Sci. U.S.A.">
        <title>The glial voltage-gated sodium channel: cell- and tissue-specific mRNA expression.</title>
        <authorList>
            <person name="Gautron S."/>
            <person name="Dos Santos G."/>
            <person name="Pinto-Henrique D."/>
            <person name="Koulakoff A."/>
            <person name="Gros F."/>
            <person name="Berwald-Netter Y."/>
        </authorList>
    </citation>
    <scope>NUCLEOTIDE SEQUENCE [MRNA] OF 1246-1680</scope>
    <scope>TISSUE SPECIFICITY</scope>
    <source>
        <strain>Sprague-Dawley</strain>
    </source>
</reference>
<reference key="4">
    <citation type="journal article" date="2011" name="J. Neurophysiol.">
        <title>Neuronal sodium leak channel is responsible for the detection of sodium in the rat median preoptic nucleus.</title>
        <authorList>
            <person name="Tremblay C."/>
            <person name="Berret E."/>
            <person name="Henry M."/>
            <person name="Nehme B."/>
            <person name="Nadeau L."/>
            <person name="Mouginot D."/>
        </authorList>
    </citation>
    <scope>FUNCTION</scope>
    <scope>TRANSPORTER ACTIVITY</scope>
</reference>
<reference key="5">
    <citation type="journal article" date="2012" name="Nat. Commun.">
        <title>Quantitative maps of protein phosphorylation sites across 14 different rat organs and tissues.</title>
        <authorList>
            <person name="Lundby A."/>
            <person name="Secher A."/>
            <person name="Lage K."/>
            <person name="Nordsborg N.B."/>
            <person name="Dmytriyev A."/>
            <person name="Lundby C."/>
            <person name="Olsen J.V."/>
        </authorList>
    </citation>
    <scope>IDENTIFICATION BY MASS SPECTROMETRY [LARGE SCALE ANALYSIS]</scope>
</reference>